<comment type="subcellular location">
    <subcellularLocation>
        <location evidence="1">Cell membrane</location>
        <topology evidence="1">Multi-pass membrane protein</topology>
    </subcellularLocation>
</comment>
<comment type="similarity">
    <text evidence="3">Belongs to the UPF0754 family.</text>
</comment>
<comment type="sequence caution" evidence="3">
    <conflict type="erroneous initiation">
        <sequence resource="EMBL-CDS" id="ACM11374"/>
    </conflict>
</comment>
<sequence>MNIWLSMLTTTGLGAIIGGFTNHLAIKMLFRPHRPIYIGKFQVPFTPGLIPKRRDELAVQLGKMVVEHLLTPEGIGKKLTNEEFQKGLIHWAQVEVDKVITNEQSLRHMLEKWDVAHVEKEATEKIEQVITEKIQSFLEEYYTYTWEQALPHSVHEKIENAIPNVSAFILKRAIHFFESEEGKSRLSKMIDDFFASRGTLLNLVGMFLGNVSVVDRVQPEVIKFLGQDGTKQLLTEVLQKEWEKLKGRDVKEVETFVEKEMIVSSILSAVKVEETVSKFLNQSVQQVCEPVRETIMEKVVPSAVTKGLKWGAENVASILNNLHLAEIVQQEVSTFSTERLEDLVLSITKNELKMITYLGALLGGMIGIVQGLLLLFLK</sequence>
<dbReference type="EMBL" id="CP000227">
    <property type="protein sequence ID" value="ACM11374.1"/>
    <property type="status" value="ALT_INIT"/>
    <property type="molecule type" value="Genomic_DNA"/>
</dbReference>
<dbReference type="SMR" id="B9IR99"/>
<dbReference type="KEGG" id="bcq:BCQ_0944"/>
<dbReference type="HOGENOM" id="CLU_042384_0_0_9"/>
<dbReference type="Proteomes" id="UP000000441">
    <property type="component" value="Chromosome"/>
</dbReference>
<dbReference type="GO" id="GO:0005886">
    <property type="term" value="C:plasma membrane"/>
    <property type="evidence" value="ECO:0007669"/>
    <property type="project" value="UniProtKB-SubCell"/>
</dbReference>
<dbReference type="InterPro" id="IPR007383">
    <property type="entry name" value="DUF445"/>
</dbReference>
<dbReference type="InterPro" id="IPR016991">
    <property type="entry name" value="UCP032178"/>
</dbReference>
<dbReference type="PANTHER" id="PTHR35791">
    <property type="entry name" value="UPF0754 MEMBRANE PROTEIN YHEB"/>
    <property type="match status" value="1"/>
</dbReference>
<dbReference type="PANTHER" id="PTHR35791:SF1">
    <property type="entry name" value="UPF0754 MEMBRANE PROTEIN YHEB"/>
    <property type="match status" value="1"/>
</dbReference>
<dbReference type="Pfam" id="PF04286">
    <property type="entry name" value="DUF445"/>
    <property type="match status" value="1"/>
</dbReference>
<dbReference type="PIRSF" id="PIRSF032178">
    <property type="entry name" value="UCP032178"/>
    <property type="match status" value="1"/>
</dbReference>
<gene>
    <name type="ordered locus">BCQ_0944</name>
</gene>
<name>Y944_BACCQ</name>
<accession>B9IR99</accession>
<organism>
    <name type="scientific">Bacillus cereus (strain Q1)</name>
    <dbReference type="NCBI Taxonomy" id="361100"/>
    <lineage>
        <taxon>Bacteria</taxon>
        <taxon>Bacillati</taxon>
        <taxon>Bacillota</taxon>
        <taxon>Bacilli</taxon>
        <taxon>Bacillales</taxon>
        <taxon>Bacillaceae</taxon>
        <taxon>Bacillus</taxon>
        <taxon>Bacillus cereus group</taxon>
    </lineage>
</organism>
<proteinExistence type="inferred from homology"/>
<feature type="chain" id="PRO_0000388275" description="UPF0754 membrane protein BCQ_0944">
    <location>
        <begin position="1"/>
        <end position="378"/>
    </location>
</feature>
<feature type="transmembrane region" description="Helical" evidence="2">
    <location>
        <begin position="1"/>
        <end position="21"/>
    </location>
</feature>
<feature type="transmembrane region" description="Helical" evidence="2">
    <location>
        <begin position="357"/>
        <end position="377"/>
    </location>
</feature>
<reference key="1">
    <citation type="journal article" date="2009" name="J. Bacteriol.">
        <title>Complete genome sequence of the extremophilic Bacillus cereus strain Q1 with industrial applications.</title>
        <authorList>
            <person name="Xiong Z."/>
            <person name="Jiang Y."/>
            <person name="Qi D."/>
            <person name="Lu H."/>
            <person name="Yang F."/>
            <person name="Yang J."/>
            <person name="Chen L."/>
            <person name="Sun L."/>
            <person name="Xu X."/>
            <person name="Xue Y."/>
            <person name="Zhu Y."/>
            <person name="Jin Q."/>
        </authorList>
    </citation>
    <scope>NUCLEOTIDE SEQUENCE [LARGE SCALE GENOMIC DNA]</scope>
    <source>
        <strain>Q1</strain>
    </source>
</reference>
<keyword id="KW-1003">Cell membrane</keyword>
<keyword id="KW-0472">Membrane</keyword>
<keyword id="KW-0812">Transmembrane</keyword>
<keyword id="KW-1133">Transmembrane helix</keyword>
<protein>
    <recommendedName>
        <fullName>UPF0754 membrane protein BCQ_0944</fullName>
    </recommendedName>
</protein>
<evidence type="ECO:0000250" key="1"/>
<evidence type="ECO:0000255" key="2"/>
<evidence type="ECO:0000305" key="3"/>